<protein>
    <recommendedName>
        <fullName evidence="1">Glucose-6-phosphate isomerase</fullName>
        <shortName evidence="1">GPI</shortName>
        <ecNumber evidence="1">5.3.1.9</ecNumber>
    </recommendedName>
    <alternativeName>
        <fullName evidence="1">Phosphoglucose isomerase</fullName>
        <shortName evidence="1">PGI</shortName>
    </alternativeName>
    <alternativeName>
        <fullName evidence="1">Phosphohexose isomerase</fullName>
        <shortName evidence="1">PHI</shortName>
    </alternativeName>
</protein>
<reference key="1">
    <citation type="journal article" date="2001" name="Proc. Natl. Acad. Sci. U.S.A.">
        <title>Complete genomic sequence of Pasteurella multocida Pm70.</title>
        <authorList>
            <person name="May B.J."/>
            <person name="Zhang Q."/>
            <person name="Li L.L."/>
            <person name="Paustian M.L."/>
            <person name="Whittam T.S."/>
            <person name="Kapur V."/>
        </authorList>
    </citation>
    <scope>NUCLEOTIDE SEQUENCE [LARGE SCALE GENOMIC DNA]</scope>
    <source>
        <strain>Pm70</strain>
    </source>
</reference>
<comment type="function">
    <text evidence="1">Catalyzes the reversible isomerization of glucose-6-phosphate to fructose-6-phosphate.</text>
</comment>
<comment type="catalytic activity">
    <reaction evidence="1">
        <text>alpha-D-glucose 6-phosphate = beta-D-fructose 6-phosphate</text>
        <dbReference type="Rhea" id="RHEA:11816"/>
        <dbReference type="ChEBI" id="CHEBI:57634"/>
        <dbReference type="ChEBI" id="CHEBI:58225"/>
        <dbReference type="EC" id="5.3.1.9"/>
    </reaction>
</comment>
<comment type="pathway">
    <text evidence="1">Carbohydrate biosynthesis; gluconeogenesis.</text>
</comment>
<comment type="pathway">
    <text evidence="1">Carbohydrate degradation; glycolysis; D-glyceraldehyde 3-phosphate and glycerone phosphate from D-glucose: step 2/4.</text>
</comment>
<comment type="subcellular location">
    <subcellularLocation>
        <location evidence="1">Cytoplasm</location>
    </subcellularLocation>
</comment>
<comment type="similarity">
    <text evidence="1 2">Belongs to the GPI family.</text>
</comment>
<organism>
    <name type="scientific">Pasteurella multocida (strain Pm70)</name>
    <dbReference type="NCBI Taxonomy" id="272843"/>
    <lineage>
        <taxon>Bacteria</taxon>
        <taxon>Pseudomonadati</taxon>
        <taxon>Pseudomonadota</taxon>
        <taxon>Gammaproteobacteria</taxon>
        <taxon>Pasteurellales</taxon>
        <taxon>Pasteurellaceae</taxon>
        <taxon>Pasteurella</taxon>
    </lineage>
</organism>
<feature type="chain" id="PRO_0000180700" description="Glucose-6-phosphate isomerase">
    <location>
        <begin position="1"/>
        <end position="549"/>
    </location>
</feature>
<feature type="active site" description="Proton donor" evidence="1">
    <location>
        <position position="355"/>
    </location>
</feature>
<feature type="active site" evidence="1">
    <location>
        <position position="387"/>
    </location>
</feature>
<feature type="active site" evidence="1">
    <location>
        <position position="515"/>
    </location>
</feature>
<accession>Q9CNL2</accession>
<sequence>MKNINPTTTNAWKALQQHHKTQSAVTIQQLFAQEKDRFTDYSLSFNNEVLVDFSKNNVTKETLGLLRQLAQECALSEAVDAMFSGAKINKTEDRAVLHTALRNRSNSPVLVDGKDVMPEVNAVLAKMKDFCHRVISGEWKGYTGKAITDVVNIGIGGSDLGPYMVTEALRPYKNHLNLHFVSNVDGTHIAETLKKVNPETTLFLVASKTFTTQETMTNAHSARNWFLATAKDESHVAKHFAALSTNSKAVAEFGIDTNNMFEFWDWVGGRYSLWSAIGLSIALSIGFEHFEALLAGAHEMDKHFRTAPIEQNIPTTLALIGLWNTNFLGAQTEAILPYDQYLHRFAAYFQQGNMESNGKYVDRNGEVIDNYQTGPIIWGEPGTNGQHAFYQLIHQGTTLIPCDFIAPAQTHNPLADHHEKLLSNFFAQTEALAFGKTKEEVEAEFVKAGKSLDEVKEVVPFKVFTGNKPTNSILVQKITPFTLGALIAMYEHKIFVQGVMFNIYSFDQWGVELGKQLANRILPELANRETITTHDSSTNGLINQYKQWR</sequence>
<dbReference type="EC" id="5.3.1.9" evidence="1"/>
<dbReference type="EMBL" id="AE004439">
    <property type="protein sequence ID" value="AAK02500.1"/>
    <property type="molecule type" value="Genomic_DNA"/>
</dbReference>
<dbReference type="RefSeq" id="WP_005726133.1">
    <property type="nucleotide sequence ID" value="NC_002663.1"/>
</dbReference>
<dbReference type="SMR" id="Q9CNL2"/>
<dbReference type="STRING" id="272843.PM0416"/>
<dbReference type="EnsemblBacteria" id="AAK02500">
    <property type="protein sequence ID" value="AAK02500"/>
    <property type="gene ID" value="PM0416"/>
</dbReference>
<dbReference type="KEGG" id="pmu:PM0416"/>
<dbReference type="PATRIC" id="fig|272843.6.peg.428"/>
<dbReference type="HOGENOM" id="CLU_017947_3_1_6"/>
<dbReference type="OrthoDB" id="140919at2"/>
<dbReference type="UniPathway" id="UPA00109">
    <property type="reaction ID" value="UER00181"/>
</dbReference>
<dbReference type="UniPathway" id="UPA00138"/>
<dbReference type="Proteomes" id="UP000000809">
    <property type="component" value="Chromosome"/>
</dbReference>
<dbReference type="GO" id="GO:0005829">
    <property type="term" value="C:cytosol"/>
    <property type="evidence" value="ECO:0007669"/>
    <property type="project" value="TreeGrafter"/>
</dbReference>
<dbReference type="GO" id="GO:0097367">
    <property type="term" value="F:carbohydrate derivative binding"/>
    <property type="evidence" value="ECO:0007669"/>
    <property type="project" value="InterPro"/>
</dbReference>
<dbReference type="GO" id="GO:0004347">
    <property type="term" value="F:glucose-6-phosphate isomerase activity"/>
    <property type="evidence" value="ECO:0007669"/>
    <property type="project" value="UniProtKB-UniRule"/>
</dbReference>
<dbReference type="GO" id="GO:0048029">
    <property type="term" value="F:monosaccharide binding"/>
    <property type="evidence" value="ECO:0007669"/>
    <property type="project" value="TreeGrafter"/>
</dbReference>
<dbReference type="GO" id="GO:0006094">
    <property type="term" value="P:gluconeogenesis"/>
    <property type="evidence" value="ECO:0007669"/>
    <property type="project" value="UniProtKB-UniRule"/>
</dbReference>
<dbReference type="GO" id="GO:0051156">
    <property type="term" value="P:glucose 6-phosphate metabolic process"/>
    <property type="evidence" value="ECO:0007669"/>
    <property type="project" value="TreeGrafter"/>
</dbReference>
<dbReference type="GO" id="GO:0006096">
    <property type="term" value="P:glycolytic process"/>
    <property type="evidence" value="ECO:0007669"/>
    <property type="project" value="UniProtKB-UniRule"/>
</dbReference>
<dbReference type="CDD" id="cd05015">
    <property type="entry name" value="SIS_PGI_1"/>
    <property type="match status" value="1"/>
</dbReference>
<dbReference type="CDD" id="cd05016">
    <property type="entry name" value="SIS_PGI_2"/>
    <property type="match status" value="1"/>
</dbReference>
<dbReference type="FunFam" id="1.10.1390.10:FF:000001">
    <property type="entry name" value="Glucose-6-phosphate isomerase"/>
    <property type="match status" value="1"/>
</dbReference>
<dbReference type="FunFam" id="3.40.50.10490:FF:000004">
    <property type="entry name" value="Glucose-6-phosphate isomerase"/>
    <property type="match status" value="1"/>
</dbReference>
<dbReference type="Gene3D" id="1.10.1390.10">
    <property type="match status" value="1"/>
</dbReference>
<dbReference type="Gene3D" id="3.40.50.10490">
    <property type="entry name" value="Glucose-6-phosphate isomerase like protein, domain 1"/>
    <property type="match status" value="2"/>
</dbReference>
<dbReference type="HAMAP" id="MF_00473">
    <property type="entry name" value="G6P_isomerase"/>
    <property type="match status" value="1"/>
</dbReference>
<dbReference type="InterPro" id="IPR001672">
    <property type="entry name" value="G6P_Isomerase"/>
</dbReference>
<dbReference type="InterPro" id="IPR023096">
    <property type="entry name" value="G6P_Isomerase_C"/>
</dbReference>
<dbReference type="InterPro" id="IPR018189">
    <property type="entry name" value="Phosphoglucose_isomerase_CS"/>
</dbReference>
<dbReference type="InterPro" id="IPR046348">
    <property type="entry name" value="SIS_dom_sf"/>
</dbReference>
<dbReference type="InterPro" id="IPR035476">
    <property type="entry name" value="SIS_PGI_1"/>
</dbReference>
<dbReference type="InterPro" id="IPR035482">
    <property type="entry name" value="SIS_PGI_2"/>
</dbReference>
<dbReference type="NCBIfam" id="NF001211">
    <property type="entry name" value="PRK00179.1"/>
    <property type="match status" value="1"/>
</dbReference>
<dbReference type="PANTHER" id="PTHR11469">
    <property type="entry name" value="GLUCOSE-6-PHOSPHATE ISOMERASE"/>
    <property type="match status" value="1"/>
</dbReference>
<dbReference type="PANTHER" id="PTHR11469:SF1">
    <property type="entry name" value="GLUCOSE-6-PHOSPHATE ISOMERASE"/>
    <property type="match status" value="1"/>
</dbReference>
<dbReference type="Pfam" id="PF00342">
    <property type="entry name" value="PGI"/>
    <property type="match status" value="1"/>
</dbReference>
<dbReference type="PRINTS" id="PR00662">
    <property type="entry name" value="G6PISOMERASE"/>
</dbReference>
<dbReference type="SUPFAM" id="SSF53697">
    <property type="entry name" value="SIS domain"/>
    <property type="match status" value="1"/>
</dbReference>
<dbReference type="PROSITE" id="PS00765">
    <property type="entry name" value="P_GLUCOSE_ISOMERASE_1"/>
    <property type="match status" value="1"/>
</dbReference>
<dbReference type="PROSITE" id="PS00174">
    <property type="entry name" value="P_GLUCOSE_ISOMERASE_2"/>
    <property type="match status" value="1"/>
</dbReference>
<dbReference type="PROSITE" id="PS51463">
    <property type="entry name" value="P_GLUCOSE_ISOMERASE_3"/>
    <property type="match status" value="1"/>
</dbReference>
<keyword id="KW-0963">Cytoplasm</keyword>
<keyword id="KW-0312">Gluconeogenesis</keyword>
<keyword id="KW-0324">Glycolysis</keyword>
<keyword id="KW-0413">Isomerase</keyword>
<keyword id="KW-1185">Reference proteome</keyword>
<proteinExistence type="inferred from homology"/>
<evidence type="ECO:0000255" key="1">
    <source>
        <dbReference type="HAMAP-Rule" id="MF_00473"/>
    </source>
</evidence>
<evidence type="ECO:0000305" key="2"/>
<gene>
    <name evidence="1" type="primary">pgi</name>
    <name type="ordered locus">PM0416</name>
</gene>
<name>G6PI_PASMU</name>